<organism>
    <name type="scientific">Mycobacterium leprae (strain TN)</name>
    <dbReference type="NCBI Taxonomy" id="272631"/>
    <lineage>
        <taxon>Bacteria</taxon>
        <taxon>Bacillati</taxon>
        <taxon>Actinomycetota</taxon>
        <taxon>Actinomycetes</taxon>
        <taxon>Mycobacteriales</taxon>
        <taxon>Mycobacteriaceae</taxon>
        <taxon>Mycobacterium</taxon>
    </lineage>
</organism>
<reference key="1">
    <citation type="journal article" date="2001" name="Nature">
        <title>Massive gene decay in the leprosy bacillus.</title>
        <authorList>
            <person name="Cole S.T."/>
            <person name="Eiglmeier K."/>
            <person name="Parkhill J."/>
            <person name="James K.D."/>
            <person name="Thomson N.R."/>
            <person name="Wheeler P.R."/>
            <person name="Honore N."/>
            <person name="Garnier T."/>
            <person name="Churcher C.M."/>
            <person name="Harris D.E."/>
            <person name="Mungall K.L."/>
            <person name="Basham D."/>
            <person name="Brown D."/>
            <person name="Chillingworth T."/>
            <person name="Connor R."/>
            <person name="Davies R.M."/>
            <person name="Devlin K."/>
            <person name="Duthoy S."/>
            <person name="Feltwell T."/>
            <person name="Fraser A."/>
            <person name="Hamlin N."/>
            <person name="Holroyd S."/>
            <person name="Hornsby T."/>
            <person name="Jagels K."/>
            <person name="Lacroix C."/>
            <person name="Maclean J."/>
            <person name="Moule S."/>
            <person name="Murphy L.D."/>
            <person name="Oliver K."/>
            <person name="Quail M.A."/>
            <person name="Rajandream M.A."/>
            <person name="Rutherford K.M."/>
            <person name="Rutter S."/>
            <person name="Seeger K."/>
            <person name="Simon S."/>
            <person name="Simmonds M."/>
            <person name="Skelton J."/>
            <person name="Squares R."/>
            <person name="Squares S."/>
            <person name="Stevens K."/>
            <person name="Taylor K."/>
            <person name="Whitehead S."/>
            <person name="Woodward J.R."/>
            <person name="Barrell B.G."/>
        </authorList>
    </citation>
    <scope>NUCLEOTIDE SEQUENCE [LARGE SCALE GENOMIC DNA]</scope>
    <source>
        <strain>TN</strain>
    </source>
</reference>
<evidence type="ECO:0000255" key="1">
    <source>
        <dbReference type="HAMAP-Rule" id="MF_00011"/>
    </source>
</evidence>
<keyword id="KW-0963">Cytoplasm</keyword>
<keyword id="KW-0342">GTP-binding</keyword>
<keyword id="KW-0436">Ligase</keyword>
<keyword id="KW-0460">Magnesium</keyword>
<keyword id="KW-0479">Metal-binding</keyword>
<keyword id="KW-0547">Nucleotide-binding</keyword>
<keyword id="KW-0658">Purine biosynthesis</keyword>
<keyword id="KW-1185">Reference proteome</keyword>
<feature type="chain" id="PRO_0000095198" description="Adenylosuccinate synthetase">
    <location>
        <begin position="1"/>
        <end position="432"/>
    </location>
</feature>
<feature type="active site" description="Proton acceptor" evidence="1">
    <location>
        <position position="13"/>
    </location>
</feature>
<feature type="active site" description="Proton donor" evidence="1">
    <location>
        <position position="41"/>
    </location>
</feature>
<feature type="binding site" evidence="1">
    <location>
        <begin position="12"/>
        <end position="18"/>
    </location>
    <ligand>
        <name>GTP</name>
        <dbReference type="ChEBI" id="CHEBI:37565"/>
    </ligand>
</feature>
<feature type="binding site" description="in other chain" evidence="1">
    <location>
        <begin position="13"/>
        <end position="16"/>
    </location>
    <ligand>
        <name>IMP</name>
        <dbReference type="ChEBI" id="CHEBI:58053"/>
        <note>ligand shared between dimeric partners</note>
    </ligand>
</feature>
<feature type="binding site" evidence="1">
    <location>
        <position position="13"/>
    </location>
    <ligand>
        <name>Mg(2+)</name>
        <dbReference type="ChEBI" id="CHEBI:18420"/>
    </ligand>
</feature>
<feature type="binding site" description="in other chain" evidence="1">
    <location>
        <begin position="38"/>
        <end position="41"/>
    </location>
    <ligand>
        <name>IMP</name>
        <dbReference type="ChEBI" id="CHEBI:58053"/>
        <note>ligand shared between dimeric partners</note>
    </ligand>
</feature>
<feature type="binding site" evidence="1">
    <location>
        <begin position="40"/>
        <end position="42"/>
    </location>
    <ligand>
        <name>GTP</name>
        <dbReference type="ChEBI" id="CHEBI:37565"/>
    </ligand>
</feature>
<feature type="binding site" evidence="1">
    <location>
        <position position="40"/>
    </location>
    <ligand>
        <name>Mg(2+)</name>
        <dbReference type="ChEBI" id="CHEBI:18420"/>
    </ligand>
</feature>
<feature type="binding site" description="in other chain" evidence="1">
    <location>
        <position position="129"/>
    </location>
    <ligand>
        <name>IMP</name>
        <dbReference type="ChEBI" id="CHEBI:58053"/>
        <note>ligand shared between dimeric partners</note>
    </ligand>
</feature>
<feature type="binding site" evidence="1">
    <location>
        <position position="143"/>
    </location>
    <ligand>
        <name>IMP</name>
        <dbReference type="ChEBI" id="CHEBI:58053"/>
        <note>ligand shared between dimeric partners</note>
    </ligand>
</feature>
<feature type="binding site" description="in other chain" evidence="1">
    <location>
        <position position="224"/>
    </location>
    <ligand>
        <name>IMP</name>
        <dbReference type="ChEBI" id="CHEBI:58053"/>
        <note>ligand shared between dimeric partners</note>
    </ligand>
</feature>
<feature type="binding site" description="in other chain" evidence="1">
    <location>
        <position position="239"/>
    </location>
    <ligand>
        <name>IMP</name>
        <dbReference type="ChEBI" id="CHEBI:58053"/>
        <note>ligand shared between dimeric partners</note>
    </ligand>
</feature>
<feature type="binding site" evidence="1">
    <location>
        <begin position="299"/>
        <end position="305"/>
    </location>
    <ligand>
        <name>substrate</name>
    </ligand>
</feature>
<feature type="binding site" description="in other chain" evidence="1">
    <location>
        <position position="303"/>
    </location>
    <ligand>
        <name>IMP</name>
        <dbReference type="ChEBI" id="CHEBI:58053"/>
        <note>ligand shared between dimeric partners</note>
    </ligand>
</feature>
<feature type="binding site" evidence="1">
    <location>
        <position position="305"/>
    </location>
    <ligand>
        <name>GTP</name>
        <dbReference type="ChEBI" id="CHEBI:37565"/>
    </ligand>
</feature>
<feature type="binding site" evidence="1">
    <location>
        <begin position="331"/>
        <end position="333"/>
    </location>
    <ligand>
        <name>GTP</name>
        <dbReference type="ChEBI" id="CHEBI:37565"/>
    </ligand>
</feature>
<feature type="binding site" evidence="1">
    <location>
        <begin position="413"/>
        <end position="415"/>
    </location>
    <ligand>
        <name>GTP</name>
        <dbReference type="ChEBI" id="CHEBI:37565"/>
    </ligand>
</feature>
<comment type="function">
    <text evidence="1">Plays an important role in the de novo pathway of purine nucleotide biosynthesis. Catalyzes the first committed step in the biosynthesis of AMP from IMP.</text>
</comment>
<comment type="catalytic activity">
    <reaction evidence="1">
        <text>IMP + L-aspartate + GTP = N(6)-(1,2-dicarboxyethyl)-AMP + GDP + phosphate + 2 H(+)</text>
        <dbReference type="Rhea" id="RHEA:15753"/>
        <dbReference type="ChEBI" id="CHEBI:15378"/>
        <dbReference type="ChEBI" id="CHEBI:29991"/>
        <dbReference type="ChEBI" id="CHEBI:37565"/>
        <dbReference type="ChEBI" id="CHEBI:43474"/>
        <dbReference type="ChEBI" id="CHEBI:57567"/>
        <dbReference type="ChEBI" id="CHEBI:58053"/>
        <dbReference type="ChEBI" id="CHEBI:58189"/>
        <dbReference type="EC" id="6.3.4.4"/>
    </reaction>
</comment>
<comment type="cofactor">
    <cofactor evidence="1">
        <name>Mg(2+)</name>
        <dbReference type="ChEBI" id="CHEBI:18420"/>
    </cofactor>
    <text evidence="1">Binds 1 Mg(2+) ion per subunit.</text>
</comment>
<comment type="pathway">
    <text evidence="1">Purine metabolism; AMP biosynthesis via de novo pathway; AMP from IMP: step 1/2.</text>
</comment>
<comment type="subunit">
    <text evidence="1">Homodimer.</text>
</comment>
<comment type="subcellular location">
    <subcellularLocation>
        <location evidence="1">Cytoplasm</location>
    </subcellularLocation>
</comment>
<comment type="similarity">
    <text evidence="1">Belongs to the adenylosuccinate synthetase family.</text>
</comment>
<dbReference type="EC" id="6.3.4.4" evidence="1"/>
<dbReference type="EMBL" id="AL023514">
    <property type="protein sequence ID" value="CAA18944.1"/>
    <property type="molecule type" value="Genomic_DNA"/>
</dbReference>
<dbReference type="EMBL" id="AL583918">
    <property type="protein sequence ID" value="CAC29788.1"/>
    <property type="molecule type" value="Genomic_DNA"/>
</dbReference>
<dbReference type="PIR" id="H86943">
    <property type="entry name" value="H86943"/>
</dbReference>
<dbReference type="RefSeq" id="NP_301321.1">
    <property type="nucleotide sequence ID" value="NC_002677.1"/>
</dbReference>
<dbReference type="RefSeq" id="WP_010907645.1">
    <property type="nucleotide sequence ID" value="NC_002677.1"/>
</dbReference>
<dbReference type="SMR" id="O69595"/>
<dbReference type="STRING" id="272631.gene:17574099"/>
<dbReference type="KEGG" id="mle:ML0280"/>
<dbReference type="PATRIC" id="fig|272631.5.peg.444"/>
<dbReference type="Leproma" id="ML0280"/>
<dbReference type="eggNOG" id="COG0104">
    <property type="taxonomic scope" value="Bacteria"/>
</dbReference>
<dbReference type="HOGENOM" id="CLU_029848_0_0_11"/>
<dbReference type="OrthoDB" id="9807553at2"/>
<dbReference type="UniPathway" id="UPA00075">
    <property type="reaction ID" value="UER00335"/>
</dbReference>
<dbReference type="Proteomes" id="UP000000806">
    <property type="component" value="Chromosome"/>
</dbReference>
<dbReference type="GO" id="GO:0005737">
    <property type="term" value="C:cytoplasm"/>
    <property type="evidence" value="ECO:0007669"/>
    <property type="project" value="UniProtKB-SubCell"/>
</dbReference>
<dbReference type="GO" id="GO:0004019">
    <property type="term" value="F:adenylosuccinate synthase activity"/>
    <property type="evidence" value="ECO:0007669"/>
    <property type="project" value="UniProtKB-UniRule"/>
</dbReference>
<dbReference type="GO" id="GO:0005525">
    <property type="term" value="F:GTP binding"/>
    <property type="evidence" value="ECO:0007669"/>
    <property type="project" value="UniProtKB-UniRule"/>
</dbReference>
<dbReference type="GO" id="GO:0000287">
    <property type="term" value="F:magnesium ion binding"/>
    <property type="evidence" value="ECO:0007669"/>
    <property type="project" value="UniProtKB-UniRule"/>
</dbReference>
<dbReference type="GO" id="GO:0044208">
    <property type="term" value="P:'de novo' AMP biosynthetic process"/>
    <property type="evidence" value="ECO:0007669"/>
    <property type="project" value="UniProtKB-UniRule"/>
</dbReference>
<dbReference type="GO" id="GO:0046040">
    <property type="term" value="P:IMP metabolic process"/>
    <property type="evidence" value="ECO:0007669"/>
    <property type="project" value="TreeGrafter"/>
</dbReference>
<dbReference type="CDD" id="cd03108">
    <property type="entry name" value="AdSS"/>
    <property type="match status" value="1"/>
</dbReference>
<dbReference type="FunFam" id="1.10.300.10:FF:000001">
    <property type="entry name" value="Adenylosuccinate synthetase"/>
    <property type="match status" value="1"/>
</dbReference>
<dbReference type="FunFam" id="3.90.170.10:FF:000001">
    <property type="entry name" value="Adenylosuccinate synthetase"/>
    <property type="match status" value="1"/>
</dbReference>
<dbReference type="Gene3D" id="3.40.440.10">
    <property type="entry name" value="Adenylosuccinate Synthetase, subunit A, domain 1"/>
    <property type="match status" value="1"/>
</dbReference>
<dbReference type="Gene3D" id="1.10.300.10">
    <property type="entry name" value="Adenylosuccinate Synthetase, subunit A, domain 2"/>
    <property type="match status" value="1"/>
</dbReference>
<dbReference type="Gene3D" id="3.90.170.10">
    <property type="entry name" value="Adenylosuccinate Synthetase, subunit A, domain 3"/>
    <property type="match status" value="1"/>
</dbReference>
<dbReference type="HAMAP" id="MF_00011">
    <property type="entry name" value="Adenylosucc_synth"/>
    <property type="match status" value="1"/>
</dbReference>
<dbReference type="InterPro" id="IPR018220">
    <property type="entry name" value="Adenylosuccin_syn_GTP-bd"/>
</dbReference>
<dbReference type="InterPro" id="IPR033128">
    <property type="entry name" value="Adenylosuccin_syn_Lys_AS"/>
</dbReference>
<dbReference type="InterPro" id="IPR042109">
    <property type="entry name" value="Adenylosuccinate_synth_dom1"/>
</dbReference>
<dbReference type="InterPro" id="IPR042110">
    <property type="entry name" value="Adenylosuccinate_synth_dom2"/>
</dbReference>
<dbReference type="InterPro" id="IPR042111">
    <property type="entry name" value="Adenylosuccinate_synth_dom3"/>
</dbReference>
<dbReference type="InterPro" id="IPR001114">
    <property type="entry name" value="Adenylosuccinate_synthetase"/>
</dbReference>
<dbReference type="InterPro" id="IPR027417">
    <property type="entry name" value="P-loop_NTPase"/>
</dbReference>
<dbReference type="NCBIfam" id="NF002223">
    <property type="entry name" value="PRK01117.1"/>
    <property type="match status" value="1"/>
</dbReference>
<dbReference type="NCBIfam" id="TIGR00184">
    <property type="entry name" value="purA"/>
    <property type="match status" value="1"/>
</dbReference>
<dbReference type="PANTHER" id="PTHR11846">
    <property type="entry name" value="ADENYLOSUCCINATE SYNTHETASE"/>
    <property type="match status" value="1"/>
</dbReference>
<dbReference type="PANTHER" id="PTHR11846:SF0">
    <property type="entry name" value="ADENYLOSUCCINATE SYNTHETASE"/>
    <property type="match status" value="1"/>
</dbReference>
<dbReference type="Pfam" id="PF00709">
    <property type="entry name" value="Adenylsucc_synt"/>
    <property type="match status" value="1"/>
</dbReference>
<dbReference type="SMART" id="SM00788">
    <property type="entry name" value="Adenylsucc_synt"/>
    <property type="match status" value="1"/>
</dbReference>
<dbReference type="SUPFAM" id="SSF52540">
    <property type="entry name" value="P-loop containing nucleoside triphosphate hydrolases"/>
    <property type="match status" value="1"/>
</dbReference>
<dbReference type="PROSITE" id="PS01266">
    <property type="entry name" value="ADENYLOSUCCIN_SYN_1"/>
    <property type="match status" value="1"/>
</dbReference>
<dbReference type="PROSITE" id="PS00513">
    <property type="entry name" value="ADENYLOSUCCIN_SYN_2"/>
    <property type="match status" value="1"/>
</dbReference>
<proteinExistence type="inferred from homology"/>
<name>PURA_MYCLE</name>
<protein>
    <recommendedName>
        <fullName evidence="1">Adenylosuccinate synthetase</fullName>
        <shortName evidence="1">AMPSase</shortName>
        <shortName evidence="1">AdSS</shortName>
        <ecNumber evidence="1">6.3.4.4</ecNumber>
    </recommendedName>
    <alternativeName>
        <fullName evidence="1">IMP--aspartate ligase</fullName>
    </alternativeName>
</protein>
<gene>
    <name evidence="1" type="primary">purA</name>
    <name type="ordered locus">ML0280</name>
    <name type="ORF">MLCB4.23c</name>
</gene>
<accession>O69595</accession>
<sequence length="432" mass="46793">MPAVVLIGAQWGDEGKGKVTDLLGGRAQWVVRYQGGNNAGHTVVLPTGENFTLHLIPSGVLTPGVTNVIGNGVVVDPGVLLSELQGLEDRGVDTSQLLISADAHLLMPYHVAIDKVTERYMGNKKIGTTGRGIGPCYQDKIARMGIRVADVLEPGELTHKIEAALEFKNQVLVKIYNRKALDLAQVVETLLEQAQQFRHRITDTRLLLNDALEAGETVLLEGAQGTLLDVDHGTYPYVTSSNPTAGGAALGSGIGPTRIHTVLGILKAYTTRVGSGPFPTELFDENGEYLAKTGSEIGVTTGRRRRCGWFDAVIARYATRVNGITDYFLTKLDVLSSLETVPVCVGYQIAGVRTHDMPITQSDLARAEPIYEELPGWWEDISGAREFEDLPAKARDYVLRLEELAGAQVACIGVGPGRDQTIVRCDVLRSRR</sequence>